<reference key="1">
    <citation type="journal article" date="2005" name="Nat. Biotechnol.">
        <title>The complete genome sequence of the meat-borne lactic acid bacterium Lactobacillus sakei 23K.</title>
        <authorList>
            <person name="Chaillou S."/>
            <person name="Champomier-Verges M.-C."/>
            <person name="Cornet M."/>
            <person name="Crutz-Le Coq A.-M."/>
            <person name="Dudez A.-M."/>
            <person name="Martin V."/>
            <person name="Beaufils S."/>
            <person name="Darbon-Rongere E."/>
            <person name="Bossy R."/>
            <person name="Loux V."/>
            <person name="Zagorec M."/>
        </authorList>
    </citation>
    <scope>NUCLEOTIDE SEQUENCE [LARGE SCALE GENOMIC DNA]</scope>
    <source>
        <strain>23K</strain>
    </source>
</reference>
<accession>Q38XB2</accession>
<name>END4_LATSS</name>
<organism>
    <name type="scientific">Latilactobacillus sakei subsp. sakei (strain 23K)</name>
    <name type="common">Lactobacillus sakei subsp. sakei</name>
    <dbReference type="NCBI Taxonomy" id="314315"/>
    <lineage>
        <taxon>Bacteria</taxon>
        <taxon>Bacillati</taxon>
        <taxon>Bacillota</taxon>
        <taxon>Bacilli</taxon>
        <taxon>Lactobacillales</taxon>
        <taxon>Lactobacillaceae</taxon>
        <taxon>Latilactobacillus</taxon>
    </lineage>
</organism>
<sequence>MLLGSHVSMKGKEMLLGSAQQAAEFGANTFMIYTGAPQNTRRKPIEELNIPAAQALIAAKNLGPIVVHAPYIVNLGNTVKPENFKFAIEFLQQEVIRAEALGASQIVLHPGAHVGAGADAGIKQIIKGLNEILRPDQTAQIALETMAGKGTEVGRRFEEIAQMIDGVTLNDKLSVTFDTCHTSDAGYNIREDFDGVLNEFDHIIGLDRLKVIHLNDSKNPQGAHKDRHANIGFGEIGFDALHGVVTHPQLVDVPKIMETPYVGKDKKHNFAPYAYEIAMLKKGEFDPDLLTKIEQNEGRL</sequence>
<protein>
    <recommendedName>
        <fullName evidence="1">Probable endonuclease 4</fullName>
        <ecNumber evidence="1">3.1.21.2</ecNumber>
    </recommendedName>
    <alternativeName>
        <fullName evidence="1">Endodeoxyribonuclease IV</fullName>
    </alternativeName>
    <alternativeName>
        <fullName evidence="1">Endonuclease IV</fullName>
    </alternativeName>
</protein>
<keyword id="KW-0227">DNA damage</keyword>
<keyword id="KW-0234">DNA repair</keyword>
<keyword id="KW-0255">Endonuclease</keyword>
<keyword id="KW-0378">Hydrolase</keyword>
<keyword id="KW-0479">Metal-binding</keyword>
<keyword id="KW-0540">Nuclease</keyword>
<keyword id="KW-1185">Reference proteome</keyword>
<keyword id="KW-0862">Zinc</keyword>
<gene>
    <name evidence="1" type="primary">nfo</name>
    <name type="ordered locus">LCA_0868</name>
</gene>
<dbReference type="EC" id="3.1.21.2" evidence="1"/>
<dbReference type="EMBL" id="CR936503">
    <property type="protein sequence ID" value="CAI55169.1"/>
    <property type="molecule type" value="Genomic_DNA"/>
</dbReference>
<dbReference type="RefSeq" id="WP_011374571.1">
    <property type="nucleotide sequence ID" value="NC_007576.1"/>
</dbReference>
<dbReference type="SMR" id="Q38XB2"/>
<dbReference type="STRING" id="314315.LCA_0868"/>
<dbReference type="KEGG" id="lsa:LCA_0868"/>
<dbReference type="eggNOG" id="COG0648">
    <property type="taxonomic scope" value="Bacteria"/>
</dbReference>
<dbReference type="HOGENOM" id="CLU_025885_4_1_9"/>
<dbReference type="OrthoDB" id="9805666at2"/>
<dbReference type="Proteomes" id="UP000002707">
    <property type="component" value="Chromosome"/>
</dbReference>
<dbReference type="GO" id="GO:0008833">
    <property type="term" value="F:deoxyribonuclease IV (phage-T4-induced) activity"/>
    <property type="evidence" value="ECO:0007669"/>
    <property type="project" value="UniProtKB-UniRule"/>
</dbReference>
<dbReference type="GO" id="GO:0003677">
    <property type="term" value="F:DNA binding"/>
    <property type="evidence" value="ECO:0007669"/>
    <property type="project" value="InterPro"/>
</dbReference>
<dbReference type="GO" id="GO:0003906">
    <property type="term" value="F:DNA-(apurinic or apyrimidinic site) endonuclease activity"/>
    <property type="evidence" value="ECO:0007669"/>
    <property type="project" value="TreeGrafter"/>
</dbReference>
<dbReference type="GO" id="GO:0008081">
    <property type="term" value="F:phosphoric diester hydrolase activity"/>
    <property type="evidence" value="ECO:0007669"/>
    <property type="project" value="TreeGrafter"/>
</dbReference>
<dbReference type="GO" id="GO:0008270">
    <property type="term" value="F:zinc ion binding"/>
    <property type="evidence" value="ECO:0007669"/>
    <property type="project" value="UniProtKB-UniRule"/>
</dbReference>
<dbReference type="GO" id="GO:0006284">
    <property type="term" value="P:base-excision repair"/>
    <property type="evidence" value="ECO:0007669"/>
    <property type="project" value="TreeGrafter"/>
</dbReference>
<dbReference type="CDD" id="cd00019">
    <property type="entry name" value="AP2Ec"/>
    <property type="match status" value="1"/>
</dbReference>
<dbReference type="FunFam" id="3.20.20.150:FF:000001">
    <property type="entry name" value="Probable endonuclease 4"/>
    <property type="match status" value="1"/>
</dbReference>
<dbReference type="Gene3D" id="3.20.20.150">
    <property type="entry name" value="Divalent-metal-dependent TIM barrel enzymes"/>
    <property type="match status" value="1"/>
</dbReference>
<dbReference type="HAMAP" id="MF_00152">
    <property type="entry name" value="Nfo"/>
    <property type="match status" value="1"/>
</dbReference>
<dbReference type="InterPro" id="IPR001719">
    <property type="entry name" value="AP_endonuc_2"/>
</dbReference>
<dbReference type="InterPro" id="IPR018246">
    <property type="entry name" value="AP_endonuc_F2_Zn_BS"/>
</dbReference>
<dbReference type="InterPro" id="IPR036237">
    <property type="entry name" value="Xyl_isomerase-like_sf"/>
</dbReference>
<dbReference type="InterPro" id="IPR013022">
    <property type="entry name" value="Xyl_isomerase-like_TIM-brl"/>
</dbReference>
<dbReference type="NCBIfam" id="TIGR00587">
    <property type="entry name" value="nfo"/>
    <property type="match status" value="1"/>
</dbReference>
<dbReference type="NCBIfam" id="NF002196">
    <property type="entry name" value="PRK01060.1-1"/>
    <property type="match status" value="1"/>
</dbReference>
<dbReference type="PANTHER" id="PTHR21445:SF0">
    <property type="entry name" value="APURINIC-APYRIMIDINIC ENDONUCLEASE"/>
    <property type="match status" value="1"/>
</dbReference>
<dbReference type="PANTHER" id="PTHR21445">
    <property type="entry name" value="ENDONUCLEASE IV ENDODEOXYRIBONUCLEASE IV"/>
    <property type="match status" value="1"/>
</dbReference>
<dbReference type="Pfam" id="PF01261">
    <property type="entry name" value="AP_endonuc_2"/>
    <property type="match status" value="1"/>
</dbReference>
<dbReference type="SMART" id="SM00518">
    <property type="entry name" value="AP2Ec"/>
    <property type="match status" value="1"/>
</dbReference>
<dbReference type="SUPFAM" id="SSF51658">
    <property type="entry name" value="Xylose isomerase-like"/>
    <property type="match status" value="1"/>
</dbReference>
<dbReference type="PROSITE" id="PS00730">
    <property type="entry name" value="AP_NUCLEASE_F2_2"/>
    <property type="match status" value="1"/>
</dbReference>
<dbReference type="PROSITE" id="PS00731">
    <property type="entry name" value="AP_NUCLEASE_F2_3"/>
    <property type="match status" value="1"/>
</dbReference>
<dbReference type="PROSITE" id="PS51432">
    <property type="entry name" value="AP_NUCLEASE_F2_4"/>
    <property type="match status" value="1"/>
</dbReference>
<feature type="chain" id="PRO_1000011311" description="Probable endonuclease 4">
    <location>
        <begin position="1"/>
        <end position="300"/>
    </location>
</feature>
<feature type="binding site" evidence="1">
    <location>
        <position position="68"/>
    </location>
    <ligand>
        <name>Zn(2+)</name>
        <dbReference type="ChEBI" id="CHEBI:29105"/>
        <label>1</label>
    </ligand>
</feature>
<feature type="binding site" evidence="1">
    <location>
        <position position="109"/>
    </location>
    <ligand>
        <name>Zn(2+)</name>
        <dbReference type="ChEBI" id="CHEBI:29105"/>
        <label>1</label>
    </ligand>
</feature>
<feature type="binding site" evidence="1">
    <location>
        <position position="144"/>
    </location>
    <ligand>
        <name>Zn(2+)</name>
        <dbReference type="ChEBI" id="CHEBI:29105"/>
        <label>1</label>
    </ligand>
</feature>
<feature type="binding site" evidence="1">
    <location>
        <position position="144"/>
    </location>
    <ligand>
        <name>Zn(2+)</name>
        <dbReference type="ChEBI" id="CHEBI:29105"/>
        <label>2</label>
    </ligand>
</feature>
<feature type="binding site" evidence="1">
    <location>
        <position position="178"/>
    </location>
    <ligand>
        <name>Zn(2+)</name>
        <dbReference type="ChEBI" id="CHEBI:29105"/>
        <label>2</label>
    </ligand>
</feature>
<feature type="binding site" evidence="1">
    <location>
        <position position="181"/>
    </location>
    <ligand>
        <name>Zn(2+)</name>
        <dbReference type="ChEBI" id="CHEBI:29105"/>
        <label>3</label>
    </ligand>
</feature>
<feature type="binding site" evidence="1">
    <location>
        <position position="213"/>
    </location>
    <ligand>
        <name>Zn(2+)</name>
        <dbReference type="ChEBI" id="CHEBI:29105"/>
        <label>2</label>
    </ligand>
</feature>
<feature type="binding site" evidence="1">
    <location>
        <position position="226"/>
    </location>
    <ligand>
        <name>Zn(2+)</name>
        <dbReference type="ChEBI" id="CHEBI:29105"/>
        <label>3</label>
    </ligand>
</feature>
<feature type="binding site" evidence="1">
    <location>
        <position position="228"/>
    </location>
    <ligand>
        <name>Zn(2+)</name>
        <dbReference type="ChEBI" id="CHEBI:29105"/>
        <label>3</label>
    </ligand>
</feature>
<feature type="binding site" evidence="1">
    <location>
        <position position="258"/>
    </location>
    <ligand>
        <name>Zn(2+)</name>
        <dbReference type="ChEBI" id="CHEBI:29105"/>
        <label>2</label>
    </ligand>
</feature>
<comment type="function">
    <text evidence="1">Endonuclease IV plays a role in DNA repair. It cleaves phosphodiester bonds at apurinic or apyrimidinic (AP) sites, generating a 3'-hydroxyl group and a 5'-terminal sugar phosphate.</text>
</comment>
<comment type="catalytic activity">
    <reaction evidence="1">
        <text>Endonucleolytic cleavage to 5'-phosphooligonucleotide end-products.</text>
        <dbReference type="EC" id="3.1.21.2"/>
    </reaction>
</comment>
<comment type="cofactor">
    <cofactor evidence="1">
        <name>Zn(2+)</name>
        <dbReference type="ChEBI" id="CHEBI:29105"/>
    </cofactor>
    <text evidence="1">Binds 3 Zn(2+) ions.</text>
</comment>
<comment type="similarity">
    <text evidence="1">Belongs to the AP endonuclease 2 family.</text>
</comment>
<evidence type="ECO:0000255" key="1">
    <source>
        <dbReference type="HAMAP-Rule" id="MF_00152"/>
    </source>
</evidence>
<proteinExistence type="inferred from homology"/>